<gene>
    <name evidence="1" type="primary">murG</name>
    <name type="ordered locus">Neut_0246</name>
</gene>
<feature type="chain" id="PRO_0000315127" description="UDP-N-acetylglucosamine--N-acetylmuramyl-(pentapeptide) pyrophosphoryl-undecaprenol N-acetylglucosamine transferase">
    <location>
        <begin position="1"/>
        <end position="355"/>
    </location>
</feature>
<feature type="binding site" evidence="1">
    <location>
        <begin position="7"/>
        <end position="9"/>
    </location>
    <ligand>
        <name>UDP-N-acetyl-alpha-D-glucosamine</name>
        <dbReference type="ChEBI" id="CHEBI:57705"/>
    </ligand>
</feature>
<feature type="binding site" evidence="1">
    <location>
        <position position="119"/>
    </location>
    <ligand>
        <name>UDP-N-acetyl-alpha-D-glucosamine</name>
        <dbReference type="ChEBI" id="CHEBI:57705"/>
    </ligand>
</feature>
<feature type="binding site" evidence="1">
    <location>
        <position position="159"/>
    </location>
    <ligand>
        <name>UDP-N-acetyl-alpha-D-glucosamine</name>
        <dbReference type="ChEBI" id="CHEBI:57705"/>
    </ligand>
</feature>
<feature type="binding site" evidence="1">
    <location>
        <position position="187"/>
    </location>
    <ligand>
        <name>UDP-N-acetyl-alpha-D-glucosamine</name>
        <dbReference type="ChEBI" id="CHEBI:57705"/>
    </ligand>
</feature>
<feature type="binding site" evidence="1">
    <location>
        <position position="241"/>
    </location>
    <ligand>
        <name>UDP-N-acetyl-alpha-D-glucosamine</name>
        <dbReference type="ChEBI" id="CHEBI:57705"/>
    </ligand>
</feature>
<feature type="binding site" evidence="1">
    <location>
        <position position="286"/>
    </location>
    <ligand>
        <name>UDP-N-acetyl-alpha-D-glucosamine</name>
        <dbReference type="ChEBI" id="CHEBI:57705"/>
    </ligand>
</feature>
<reference key="1">
    <citation type="journal article" date="2007" name="Environ. Microbiol.">
        <title>Whole-genome analysis of the ammonia-oxidizing bacterium, Nitrosomonas eutropha C91: implications for niche adaptation.</title>
        <authorList>
            <person name="Stein L.Y."/>
            <person name="Arp D.J."/>
            <person name="Berube P.M."/>
            <person name="Chain P.S."/>
            <person name="Hauser L."/>
            <person name="Jetten M.S."/>
            <person name="Klotz M.G."/>
            <person name="Larimer F.W."/>
            <person name="Norton J.M."/>
            <person name="Op den Camp H.J.M."/>
            <person name="Shin M."/>
            <person name="Wei X."/>
        </authorList>
    </citation>
    <scope>NUCLEOTIDE SEQUENCE [LARGE SCALE GENOMIC DNA]</scope>
    <source>
        <strain>DSM 101675 / C91 / Nm57</strain>
    </source>
</reference>
<evidence type="ECO:0000255" key="1">
    <source>
        <dbReference type="HAMAP-Rule" id="MF_00033"/>
    </source>
</evidence>
<evidence type="ECO:0000305" key="2"/>
<dbReference type="EC" id="2.4.1.227" evidence="1"/>
<dbReference type="EMBL" id="CP000450">
    <property type="protein sequence ID" value="ABI58530.1"/>
    <property type="status" value="ALT_INIT"/>
    <property type="molecule type" value="Genomic_DNA"/>
</dbReference>
<dbReference type="RefSeq" id="WP_011633374.1">
    <property type="nucleotide sequence ID" value="NC_008344.1"/>
</dbReference>
<dbReference type="SMR" id="Q0AJE1"/>
<dbReference type="STRING" id="335283.Neut_0246"/>
<dbReference type="CAZy" id="GT28">
    <property type="family name" value="Glycosyltransferase Family 28"/>
</dbReference>
<dbReference type="KEGG" id="net:Neut_0246"/>
<dbReference type="eggNOG" id="COG0707">
    <property type="taxonomic scope" value="Bacteria"/>
</dbReference>
<dbReference type="HOGENOM" id="CLU_037404_2_0_4"/>
<dbReference type="OrthoDB" id="9808936at2"/>
<dbReference type="UniPathway" id="UPA00219"/>
<dbReference type="Proteomes" id="UP000001966">
    <property type="component" value="Chromosome"/>
</dbReference>
<dbReference type="GO" id="GO:0005886">
    <property type="term" value="C:plasma membrane"/>
    <property type="evidence" value="ECO:0007669"/>
    <property type="project" value="UniProtKB-SubCell"/>
</dbReference>
<dbReference type="GO" id="GO:0051991">
    <property type="term" value="F:UDP-N-acetyl-D-glucosamine:N-acetylmuramoyl-L-alanyl-D-glutamyl-meso-2,6-diaminopimelyl-D-alanyl-D-alanine-diphosphoundecaprenol 4-beta-N-acetylglucosaminlytransferase activity"/>
    <property type="evidence" value="ECO:0007669"/>
    <property type="project" value="RHEA"/>
</dbReference>
<dbReference type="GO" id="GO:0050511">
    <property type="term" value="F:undecaprenyldiphospho-muramoylpentapeptide beta-N-acetylglucosaminyltransferase activity"/>
    <property type="evidence" value="ECO:0007669"/>
    <property type="project" value="UniProtKB-UniRule"/>
</dbReference>
<dbReference type="GO" id="GO:0005975">
    <property type="term" value="P:carbohydrate metabolic process"/>
    <property type="evidence" value="ECO:0007669"/>
    <property type="project" value="InterPro"/>
</dbReference>
<dbReference type="GO" id="GO:0051301">
    <property type="term" value="P:cell division"/>
    <property type="evidence" value="ECO:0007669"/>
    <property type="project" value="UniProtKB-KW"/>
</dbReference>
<dbReference type="GO" id="GO:0071555">
    <property type="term" value="P:cell wall organization"/>
    <property type="evidence" value="ECO:0007669"/>
    <property type="project" value="UniProtKB-KW"/>
</dbReference>
<dbReference type="GO" id="GO:0030259">
    <property type="term" value="P:lipid glycosylation"/>
    <property type="evidence" value="ECO:0007669"/>
    <property type="project" value="UniProtKB-UniRule"/>
</dbReference>
<dbReference type="GO" id="GO:0009252">
    <property type="term" value="P:peptidoglycan biosynthetic process"/>
    <property type="evidence" value="ECO:0007669"/>
    <property type="project" value="UniProtKB-UniRule"/>
</dbReference>
<dbReference type="GO" id="GO:0008360">
    <property type="term" value="P:regulation of cell shape"/>
    <property type="evidence" value="ECO:0007669"/>
    <property type="project" value="UniProtKB-KW"/>
</dbReference>
<dbReference type="CDD" id="cd03785">
    <property type="entry name" value="GT28_MurG"/>
    <property type="match status" value="1"/>
</dbReference>
<dbReference type="Gene3D" id="3.40.50.2000">
    <property type="entry name" value="Glycogen Phosphorylase B"/>
    <property type="match status" value="2"/>
</dbReference>
<dbReference type="HAMAP" id="MF_00033">
    <property type="entry name" value="MurG"/>
    <property type="match status" value="1"/>
</dbReference>
<dbReference type="InterPro" id="IPR006009">
    <property type="entry name" value="GlcNAc_MurG"/>
</dbReference>
<dbReference type="InterPro" id="IPR007235">
    <property type="entry name" value="Glyco_trans_28_C"/>
</dbReference>
<dbReference type="InterPro" id="IPR004276">
    <property type="entry name" value="GlycoTrans_28_N"/>
</dbReference>
<dbReference type="NCBIfam" id="TIGR01133">
    <property type="entry name" value="murG"/>
    <property type="match status" value="1"/>
</dbReference>
<dbReference type="PANTHER" id="PTHR21015:SF22">
    <property type="entry name" value="GLYCOSYLTRANSFERASE"/>
    <property type="match status" value="1"/>
</dbReference>
<dbReference type="PANTHER" id="PTHR21015">
    <property type="entry name" value="UDP-N-ACETYLGLUCOSAMINE--N-ACETYLMURAMYL-(PENTAPEPTIDE) PYROPHOSPHORYL-UNDECAPRENOL N-ACETYLGLUCOSAMINE TRANSFERASE 1"/>
    <property type="match status" value="1"/>
</dbReference>
<dbReference type="Pfam" id="PF04101">
    <property type="entry name" value="Glyco_tran_28_C"/>
    <property type="match status" value="1"/>
</dbReference>
<dbReference type="Pfam" id="PF03033">
    <property type="entry name" value="Glyco_transf_28"/>
    <property type="match status" value="1"/>
</dbReference>
<dbReference type="SUPFAM" id="SSF53756">
    <property type="entry name" value="UDP-Glycosyltransferase/glycogen phosphorylase"/>
    <property type="match status" value="1"/>
</dbReference>
<proteinExistence type="inferred from homology"/>
<organism>
    <name type="scientific">Nitrosomonas eutropha (strain DSM 101675 / C91 / Nm57)</name>
    <dbReference type="NCBI Taxonomy" id="335283"/>
    <lineage>
        <taxon>Bacteria</taxon>
        <taxon>Pseudomonadati</taxon>
        <taxon>Pseudomonadota</taxon>
        <taxon>Betaproteobacteria</taxon>
        <taxon>Nitrosomonadales</taxon>
        <taxon>Nitrosomonadaceae</taxon>
        <taxon>Nitrosomonas</taxon>
    </lineage>
</organism>
<keyword id="KW-0131">Cell cycle</keyword>
<keyword id="KW-0132">Cell division</keyword>
<keyword id="KW-0997">Cell inner membrane</keyword>
<keyword id="KW-1003">Cell membrane</keyword>
<keyword id="KW-0133">Cell shape</keyword>
<keyword id="KW-0961">Cell wall biogenesis/degradation</keyword>
<keyword id="KW-0328">Glycosyltransferase</keyword>
<keyword id="KW-0472">Membrane</keyword>
<keyword id="KW-0573">Peptidoglycan synthesis</keyword>
<keyword id="KW-0808">Transferase</keyword>
<comment type="function">
    <text evidence="1">Cell wall formation. Catalyzes the transfer of a GlcNAc subunit on undecaprenyl-pyrophosphoryl-MurNAc-pentapeptide (lipid intermediate I) to form undecaprenyl-pyrophosphoryl-MurNAc-(pentapeptide)GlcNAc (lipid intermediate II).</text>
</comment>
<comment type="catalytic activity">
    <reaction evidence="1">
        <text>di-trans,octa-cis-undecaprenyl diphospho-N-acetyl-alpha-D-muramoyl-L-alanyl-D-glutamyl-meso-2,6-diaminopimeloyl-D-alanyl-D-alanine + UDP-N-acetyl-alpha-D-glucosamine = di-trans,octa-cis-undecaprenyl diphospho-[N-acetyl-alpha-D-glucosaminyl-(1-&gt;4)]-N-acetyl-alpha-D-muramoyl-L-alanyl-D-glutamyl-meso-2,6-diaminopimeloyl-D-alanyl-D-alanine + UDP + H(+)</text>
        <dbReference type="Rhea" id="RHEA:31227"/>
        <dbReference type="ChEBI" id="CHEBI:15378"/>
        <dbReference type="ChEBI" id="CHEBI:57705"/>
        <dbReference type="ChEBI" id="CHEBI:58223"/>
        <dbReference type="ChEBI" id="CHEBI:61387"/>
        <dbReference type="ChEBI" id="CHEBI:61388"/>
        <dbReference type="EC" id="2.4.1.227"/>
    </reaction>
</comment>
<comment type="pathway">
    <text evidence="1">Cell wall biogenesis; peptidoglycan biosynthesis.</text>
</comment>
<comment type="subcellular location">
    <subcellularLocation>
        <location evidence="1">Cell inner membrane</location>
        <topology evidence="1">Peripheral membrane protein</topology>
        <orientation evidence="1">Cytoplasmic side</orientation>
    </subcellularLocation>
</comment>
<comment type="similarity">
    <text evidence="1">Belongs to the glycosyltransferase 28 family. MurG subfamily.</text>
</comment>
<comment type="sequence caution" evidence="2">
    <conflict type="erroneous initiation">
        <sequence resource="EMBL-CDS" id="ABI58530"/>
    </conflict>
</comment>
<accession>Q0AJE1</accession>
<name>MURG_NITEC</name>
<protein>
    <recommendedName>
        <fullName evidence="1">UDP-N-acetylglucosamine--N-acetylmuramyl-(pentapeptide) pyrophosphoryl-undecaprenol N-acetylglucosamine transferase</fullName>
        <ecNumber evidence="1">2.4.1.227</ecNumber>
    </recommendedName>
    <alternativeName>
        <fullName evidence="1">Undecaprenyl-PP-MurNAc-pentapeptide-UDPGlcNAc GlcNAc transferase</fullName>
    </alternativeName>
</protein>
<sequence>MIMAGGTGGHVFPGLAVARAMQAEGWRVIWLGTRNGMEATLVPQHGFTIELINFSGLRGKKPVSYLLLPWRLAKACWQSFCILRRQRPQIVLGMGGYPALPGGIMAVLSGKPLLIHEQNRIAGLTNKILAKIASRILLAFPGTITDQAGKIQVTGNPVRTEIAQLPSPEVRYAKRAGKLNILVVGGSLGAQALNTVLPQALSMIPGNQRPFVTHQSGKVHLAALQQAYAEHGVTGNLVAFIEDMAVYYQNCDLVVCRAGALTIAELAAAGVASILVPYPYAVDDHQTANARFLSEHHAAVLWPQSELTANSLAQWLMTCTRTQLQTMAINARMLAMPEAAQSVVTVCQQLIETGP</sequence>